<proteinExistence type="inferred from homology"/>
<comment type="function">
    <text evidence="1">Involved in unsaturated fatty acids biosynthesis. Catalyzes the dehydration of short chain beta-hydroxyacyl-ACPs and long chain saturated and unsaturated beta-hydroxyacyl-ACPs.</text>
</comment>
<comment type="catalytic activity">
    <reaction evidence="1">
        <text>a (3R)-hydroxyacyl-[ACP] = a (2E)-enoyl-[ACP] + H2O</text>
        <dbReference type="Rhea" id="RHEA:13097"/>
        <dbReference type="Rhea" id="RHEA-COMP:9925"/>
        <dbReference type="Rhea" id="RHEA-COMP:9945"/>
        <dbReference type="ChEBI" id="CHEBI:15377"/>
        <dbReference type="ChEBI" id="CHEBI:78784"/>
        <dbReference type="ChEBI" id="CHEBI:78827"/>
        <dbReference type="EC" id="4.2.1.59"/>
    </reaction>
</comment>
<comment type="subcellular location">
    <subcellularLocation>
        <location evidence="1">Cytoplasm</location>
    </subcellularLocation>
</comment>
<comment type="similarity">
    <text evidence="1">Belongs to the thioester dehydratase family. FabZ subfamily.</text>
</comment>
<keyword id="KW-0963">Cytoplasm</keyword>
<keyword id="KW-0441">Lipid A biosynthesis</keyword>
<keyword id="KW-0444">Lipid biosynthesis</keyword>
<keyword id="KW-0443">Lipid metabolism</keyword>
<keyword id="KW-0456">Lyase</keyword>
<keyword id="KW-1185">Reference proteome</keyword>
<protein>
    <recommendedName>
        <fullName evidence="1">3-hydroxyacyl-[acyl-carrier-protein] dehydratase FabZ</fullName>
        <ecNumber evidence="1">4.2.1.59</ecNumber>
    </recommendedName>
    <alternativeName>
        <fullName evidence="1">(3R)-hydroxymyristoyl-[acyl-carrier-protein] dehydratase</fullName>
        <shortName evidence="1">(3R)-hydroxymyristoyl-ACP dehydrase</shortName>
    </alternativeName>
    <alternativeName>
        <fullName evidence="1">Beta-hydroxyacyl-ACP dehydratase</fullName>
    </alternativeName>
</protein>
<name>FABZ_ALIF1</name>
<sequence length="150" mass="17033">MTRENKTLNITEIQELLPHRYPFLLVDRVTDFEEEKYLHAIKNVSVNEPQFTGHFPQMPIFPGVLILEAMAQATGLLAFKSFGAPAENELYYFASIDKAKFRKPVVPGDQLVLEVEFIKDRRGIALFNGVAKVDGEVVCSAELKCARREF</sequence>
<organism>
    <name type="scientific">Aliivibrio fischeri (strain ATCC 700601 / ES114)</name>
    <name type="common">Vibrio fischeri</name>
    <dbReference type="NCBI Taxonomy" id="312309"/>
    <lineage>
        <taxon>Bacteria</taxon>
        <taxon>Pseudomonadati</taxon>
        <taxon>Pseudomonadota</taxon>
        <taxon>Gammaproteobacteria</taxon>
        <taxon>Vibrionales</taxon>
        <taxon>Vibrionaceae</taxon>
        <taxon>Aliivibrio</taxon>
    </lineage>
</organism>
<gene>
    <name evidence="1" type="primary">fabZ</name>
    <name type="ordered locus">VF_1951</name>
</gene>
<reference key="1">
    <citation type="journal article" date="2005" name="Proc. Natl. Acad. Sci. U.S.A.">
        <title>Complete genome sequence of Vibrio fischeri: a symbiotic bacterium with pathogenic congeners.</title>
        <authorList>
            <person name="Ruby E.G."/>
            <person name="Urbanowski M."/>
            <person name="Campbell J."/>
            <person name="Dunn A."/>
            <person name="Faini M."/>
            <person name="Gunsalus R."/>
            <person name="Lostroh P."/>
            <person name="Lupp C."/>
            <person name="McCann J."/>
            <person name="Millikan D."/>
            <person name="Schaefer A."/>
            <person name="Stabb E."/>
            <person name="Stevens A."/>
            <person name="Visick K."/>
            <person name="Whistler C."/>
            <person name="Greenberg E.P."/>
        </authorList>
    </citation>
    <scope>NUCLEOTIDE SEQUENCE [LARGE SCALE GENOMIC DNA]</scope>
    <source>
        <strain>ATCC 700601 / ES114</strain>
    </source>
</reference>
<feature type="chain" id="PRO_0000230847" description="3-hydroxyacyl-[acyl-carrier-protein] dehydratase FabZ">
    <location>
        <begin position="1"/>
        <end position="150"/>
    </location>
</feature>
<feature type="active site" evidence="1">
    <location>
        <position position="54"/>
    </location>
</feature>
<evidence type="ECO:0000255" key="1">
    <source>
        <dbReference type="HAMAP-Rule" id="MF_00406"/>
    </source>
</evidence>
<dbReference type="EC" id="4.2.1.59" evidence="1"/>
<dbReference type="EMBL" id="CP000020">
    <property type="protein sequence ID" value="AAW86446.1"/>
    <property type="molecule type" value="Genomic_DNA"/>
</dbReference>
<dbReference type="RefSeq" id="WP_005420541.1">
    <property type="nucleotide sequence ID" value="NZ_CAWLES010000001.1"/>
</dbReference>
<dbReference type="RefSeq" id="YP_205334.1">
    <property type="nucleotide sequence ID" value="NC_006840.2"/>
</dbReference>
<dbReference type="SMR" id="Q5E3F0"/>
<dbReference type="STRING" id="312309.VF_1951"/>
<dbReference type="EnsemblBacteria" id="AAW86446">
    <property type="protein sequence ID" value="AAW86446"/>
    <property type="gene ID" value="VF_1951"/>
</dbReference>
<dbReference type="GeneID" id="54164647"/>
<dbReference type="KEGG" id="vfi:VF_1951"/>
<dbReference type="PATRIC" id="fig|312309.11.peg.1978"/>
<dbReference type="eggNOG" id="COG0764">
    <property type="taxonomic scope" value="Bacteria"/>
</dbReference>
<dbReference type="HOGENOM" id="CLU_078912_1_0_6"/>
<dbReference type="OrthoDB" id="9772788at2"/>
<dbReference type="Proteomes" id="UP000000537">
    <property type="component" value="Chromosome I"/>
</dbReference>
<dbReference type="GO" id="GO:0005737">
    <property type="term" value="C:cytoplasm"/>
    <property type="evidence" value="ECO:0007669"/>
    <property type="project" value="UniProtKB-SubCell"/>
</dbReference>
<dbReference type="GO" id="GO:0016020">
    <property type="term" value="C:membrane"/>
    <property type="evidence" value="ECO:0007669"/>
    <property type="project" value="GOC"/>
</dbReference>
<dbReference type="GO" id="GO:0019171">
    <property type="term" value="F:(3R)-hydroxyacyl-[acyl-carrier-protein] dehydratase activity"/>
    <property type="evidence" value="ECO:0007669"/>
    <property type="project" value="UniProtKB-EC"/>
</dbReference>
<dbReference type="GO" id="GO:0006633">
    <property type="term" value="P:fatty acid biosynthetic process"/>
    <property type="evidence" value="ECO:0007669"/>
    <property type="project" value="UniProtKB-UniRule"/>
</dbReference>
<dbReference type="GO" id="GO:0009245">
    <property type="term" value="P:lipid A biosynthetic process"/>
    <property type="evidence" value="ECO:0007669"/>
    <property type="project" value="UniProtKB-UniRule"/>
</dbReference>
<dbReference type="CDD" id="cd01288">
    <property type="entry name" value="FabZ"/>
    <property type="match status" value="1"/>
</dbReference>
<dbReference type="FunFam" id="3.10.129.10:FF:000001">
    <property type="entry name" value="3-hydroxyacyl-[acyl-carrier-protein] dehydratase FabZ"/>
    <property type="match status" value="1"/>
</dbReference>
<dbReference type="Gene3D" id="3.10.129.10">
    <property type="entry name" value="Hotdog Thioesterase"/>
    <property type="match status" value="1"/>
</dbReference>
<dbReference type="HAMAP" id="MF_00406">
    <property type="entry name" value="FabZ"/>
    <property type="match status" value="1"/>
</dbReference>
<dbReference type="InterPro" id="IPR013114">
    <property type="entry name" value="FabA_FabZ"/>
</dbReference>
<dbReference type="InterPro" id="IPR010084">
    <property type="entry name" value="FabZ"/>
</dbReference>
<dbReference type="InterPro" id="IPR029069">
    <property type="entry name" value="HotDog_dom_sf"/>
</dbReference>
<dbReference type="NCBIfam" id="TIGR01750">
    <property type="entry name" value="fabZ"/>
    <property type="match status" value="1"/>
</dbReference>
<dbReference type="NCBIfam" id="NF000582">
    <property type="entry name" value="PRK00006.1"/>
    <property type="match status" value="1"/>
</dbReference>
<dbReference type="PANTHER" id="PTHR30272">
    <property type="entry name" value="3-HYDROXYACYL-[ACYL-CARRIER-PROTEIN] DEHYDRATASE"/>
    <property type="match status" value="1"/>
</dbReference>
<dbReference type="PANTHER" id="PTHR30272:SF1">
    <property type="entry name" value="3-HYDROXYACYL-[ACYL-CARRIER-PROTEIN] DEHYDRATASE"/>
    <property type="match status" value="1"/>
</dbReference>
<dbReference type="Pfam" id="PF07977">
    <property type="entry name" value="FabA"/>
    <property type="match status" value="1"/>
</dbReference>
<dbReference type="SUPFAM" id="SSF54637">
    <property type="entry name" value="Thioesterase/thiol ester dehydrase-isomerase"/>
    <property type="match status" value="1"/>
</dbReference>
<accession>Q5E3F0</accession>